<accession>Q21XH1</accession>
<protein>
    <recommendedName>
        <fullName evidence="2">Malate dehydrogenase 1</fullName>
        <ecNumber evidence="2">1.1.1.37</ecNumber>
    </recommendedName>
</protein>
<dbReference type="EC" id="1.1.1.37" evidence="2"/>
<dbReference type="EMBL" id="CP000267">
    <property type="protein sequence ID" value="ABD69532.1"/>
    <property type="molecule type" value="Genomic_DNA"/>
</dbReference>
<dbReference type="RefSeq" id="WP_011464100.1">
    <property type="nucleotide sequence ID" value="NC_007908.1"/>
</dbReference>
<dbReference type="SMR" id="Q21XH1"/>
<dbReference type="STRING" id="338969.Rfer_1803"/>
<dbReference type="KEGG" id="rfr:Rfer_1803"/>
<dbReference type="eggNOG" id="COG0039">
    <property type="taxonomic scope" value="Bacteria"/>
</dbReference>
<dbReference type="HOGENOM" id="CLU_040727_2_0_4"/>
<dbReference type="OrthoDB" id="9802969at2"/>
<dbReference type="Proteomes" id="UP000008332">
    <property type="component" value="Chromosome"/>
</dbReference>
<dbReference type="GO" id="GO:0030060">
    <property type="term" value="F:L-malate dehydrogenase (NAD+) activity"/>
    <property type="evidence" value="ECO:0007669"/>
    <property type="project" value="UniProtKB-UniRule"/>
</dbReference>
<dbReference type="GO" id="GO:0006108">
    <property type="term" value="P:malate metabolic process"/>
    <property type="evidence" value="ECO:0007669"/>
    <property type="project" value="InterPro"/>
</dbReference>
<dbReference type="GO" id="GO:0006099">
    <property type="term" value="P:tricarboxylic acid cycle"/>
    <property type="evidence" value="ECO:0007669"/>
    <property type="project" value="UniProtKB-UniRule"/>
</dbReference>
<dbReference type="CDD" id="cd01338">
    <property type="entry name" value="MDH_chloroplast-like"/>
    <property type="match status" value="1"/>
</dbReference>
<dbReference type="FunFam" id="3.40.50.720:FF:000010">
    <property type="entry name" value="Malate dehydrogenase"/>
    <property type="match status" value="1"/>
</dbReference>
<dbReference type="FunFam" id="3.90.110.10:FF:000002">
    <property type="entry name" value="Malate dehydrogenase"/>
    <property type="match status" value="1"/>
</dbReference>
<dbReference type="Gene3D" id="3.90.110.10">
    <property type="entry name" value="Lactate dehydrogenase/glycoside hydrolase, family 4, C-terminal"/>
    <property type="match status" value="1"/>
</dbReference>
<dbReference type="Gene3D" id="3.40.50.720">
    <property type="entry name" value="NAD(P)-binding Rossmann-like Domain"/>
    <property type="match status" value="1"/>
</dbReference>
<dbReference type="HAMAP" id="MF_01517">
    <property type="entry name" value="Malate_dehydrog_2"/>
    <property type="match status" value="1"/>
</dbReference>
<dbReference type="InterPro" id="IPR001557">
    <property type="entry name" value="L-lactate/malate_DH"/>
</dbReference>
<dbReference type="InterPro" id="IPR022383">
    <property type="entry name" value="Lactate/malate_DH_C"/>
</dbReference>
<dbReference type="InterPro" id="IPR001236">
    <property type="entry name" value="Lactate/malate_DH_N"/>
</dbReference>
<dbReference type="InterPro" id="IPR015955">
    <property type="entry name" value="Lactate_DH/Glyco_Ohase_4_C"/>
</dbReference>
<dbReference type="InterPro" id="IPR010945">
    <property type="entry name" value="Malate_DH_type2"/>
</dbReference>
<dbReference type="InterPro" id="IPR036291">
    <property type="entry name" value="NAD(P)-bd_dom_sf"/>
</dbReference>
<dbReference type="NCBIfam" id="TIGR01759">
    <property type="entry name" value="MalateDH-SF1"/>
    <property type="match status" value="1"/>
</dbReference>
<dbReference type="NCBIfam" id="NF003916">
    <property type="entry name" value="PRK05442.1"/>
    <property type="match status" value="1"/>
</dbReference>
<dbReference type="PANTHER" id="PTHR23382">
    <property type="entry name" value="MALATE DEHYDROGENASE"/>
    <property type="match status" value="1"/>
</dbReference>
<dbReference type="Pfam" id="PF02866">
    <property type="entry name" value="Ldh_1_C"/>
    <property type="match status" value="1"/>
</dbReference>
<dbReference type="Pfam" id="PF00056">
    <property type="entry name" value="Ldh_1_N"/>
    <property type="match status" value="1"/>
</dbReference>
<dbReference type="PIRSF" id="PIRSF000102">
    <property type="entry name" value="Lac_mal_DH"/>
    <property type="match status" value="1"/>
</dbReference>
<dbReference type="SUPFAM" id="SSF56327">
    <property type="entry name" value="LDH C-terminal domain-like"/>
    <property type="match status" value="1"/>
</dbReference>
<dbReference type="SUPFAM" id="SSF51735">
    <property type="entry name" value="NAD(P)-binding Rossmann-fold domains"/>
    <property type="match status" value="1"/>
</dbReference>
<sequence length="328" mass="35077">MSKKPVRVAVTGAAGQIGYAILFRIASGEMLGKDQPVILQLLEVPVEKAQQALQGVMMELQDCAFPLLAGMEAHSDPMTAFKDVDYALLIGSRPRGPGMERAELLAVNGAIFTAQGKALNAVASRNVKVLVVGNPANTNAYIAMKSAPDLPAKNFTAMLRLDHNRALSQLASKTGKAVADIEKMAVWGNHSPTMYADYRFATINGESVKDMINDQDWNANTFLPTVGKRGAAIIAARGVSSAASAANAAIDHMRDWALGTNGKWVTMGIPSDGQYGIPKETMFGFPVTCEGGEYKVVQNLPIDAFSQECINKTLKELQDEQAGVAHLL</sequence>
<comment type="function">
    <text evidence="2">Catalyzes the reversible oxidation of malate to oxaloacetate.</text>
</comment>
<comment type="catalytic activity">
    <reaction evidence="2">
        <text>(S)-malate + NAD(+) = oxaloacetate + NADH + H(+)</text>
        <dbReference type="Rhea" id="RHEA:21432"/>
        <dbReference type="ChEBI" id="CHEBI:15378"/>
        <dbReference type="ChEBI" id="CHEBI:15589"/>
        <dbReference type="ChEBI" id="CHEBI:16452"/>
        <dbReference type="ChEBI" id="CHEBI:57540"/>
        <dbReference type="ChEBI" id="CHEBI:57945"/>
        <dbReference type="EC" id="1.1.1.37"/>
    </reaction>
</comment>
<comment type="similarity">
    <text evidence="2">Belongs to the LDH/MDH superfamily. MDH type 2 family.</text>
</comment>
<proteinExistence type="inferred from homology"/>
<name>MDH1_ALBFT</name>
<keyword id="KW-0520">NAD</keyword>
<keyword id="KW-0560">Oxidoreductase</keyword>
<keyword id="KW-1185">Reference proteome</keyword>
<keyword id="KW-0816">Tricarboxylic acid cycle</keyword>
<gene>
    <name evidence="2" type="primary">mdh1</name>
    <name type="ordered locus">Rfer_1803</name>
</gene>
<organism>
    <name type="scientific">Albidiferax ferrireducens (strain ATCC BAA-621 / DSM 15236 / T118)</name>
    <name type="common">Rhodoferax ferrireducens</name>
    <dbReference type="NCBI Taxonomy" id="338969"/>
    <lineage>
        <taxon>Bacteria</taxon>
        <taxon>Pseudomonadati</taxon>
        <taxon>Pseudomonadota</taxon>
        <taxon>Betaproteobacteria</taxon>
        <taxon>Burkholderiales</taxon>
        <taxon>Comamonadaceae</taxon>
        <taxon>Rhodoferax</taxon>
    </lineage>
</organism>
<evidence type="ECO:0000250" key="1"/>
<evidence type="ECO:0000255" key="2">
    <source>
        <dbReference type="HAMAP-Rule" id="MF_01517"/>
    </source>
</evidence>
<reference key="1">
    <citation type="submission" date="2006-02" db="EMBL/GenBank/DDBJ databases">
        <title>Complete sequence of chromosome of Rhodoferax ferrireducens DSM 15236.</title>
        <authorList>
            <person name="Copeland A."/>
            <person name="Lucas S."/>
            <person name="Lapidus A."/>
            <person name="Barry K."/>
            <person name="Detter J.C."/>
            <person name="Glavina del Rio T."/>
            <person name="Hammon N."/>
            <person name="Israni S."/>
            <person name="Pitluck S."/>
            <person name="Brettin T."/>
            <person name="Bruce D."/>
            <person name="Han C."/>
            <person name="Tapia R."/>
            <person name="Gilna P."/>
            <person name="Kiss H."/>
            <person name="Schmutz J."/>
            <person name="Larimer F."/>
            <person name="Land M."/>
            <person name="Kyrpides N."/>
            <person name="Ivanova N."/>
            <person name="Richardson P."/>
        </authorList>
    </citation>
    <scope>NUCLEOTIDE SEQUENCE [LARGE SCALE GENOMIC DNA]</scope>
    <source>
        <strain>ATCC BAA-621 / DSM 15236 / T118</strain>
    </source>
</reference>
<feature type="initiator methionine" description="Removed" evidence="1">
    <location>
        <position position="1"/>
    </location>
</feature>
<feature type="chain" id="PRO_0000294403" description="Malate dehydrogenase 1">
    <location>
        <begin position="2"/>
        <end position="328"/>
    </location>
</feature>
<feature type="active site" description="Proton acceptor" evidence="2">
    <location>
        <position position="190"/>
    </location>
</feature>
<feature type="binding site" evidence="2">
    <location>
        <begin position="12"/>
        <end position="18"/>
    </location>
    <ligand>
        <name>NAD(+)</name>
        <dbReference type="ChEBI" id="CHEBI:57540"/>
    </ligand>
</feature>
<feature type="binding site" evidence="2">
    <location>
        <position position="95"/>
    </location>
    <ligand>
        <name>substrate</name>
    </ligand>
</feature>
<feature type="binding site" evidence="2">
    <location>
        <position position="101"/>
    </location>
    <ligand>
        <name>substrate</name>
    </ligand>
</feature>
<feature type="binding site" evidence="2">
    <location>
        <position position="108"/>
    </location>
    <ligand>
        <name>NAD(+)</name>
        <dbReference type="ChEBI" id="CHEBI:57540"/>
    </ligand>
</feature>
<feature type="binding site" evidence="2">
    <location>
        <position position="115"/>
    </location>
    <ligand>
        <name>NAD(+)</name>
        <dbReference type="ChEBI" id="CHEBI:57540"/>
    </ligand>
</feature>
<feature type="binding site" evidence="2">
    <location>
        <begin position="132"/>
        <end position="134"/>
    </location>
    <ligand>
        <name>NAD(+)</name>
        <dbReference type="ChEBI" id="CHEBI:57540"/>
    </ligand>
</feature>
<feature type="binding site" evidence="2">
    <location>
        <position position="134"/>
    </location>
    <ligand>
        <name>substrate</name>
    </ligand>
</feature>
<feature type="binding site" evidence="2">
    <location>
        <position position="165"/>
    </location>
    <ligand>
        <name>substrate</name>
    </ligand>
</feature>